<organism>
    <name type="scientific">Arabidopsis thaliana</name>
    <name type="common">Mouse-ear cress</name>
    <dbReference type="NCBI Taxonomy" id="3702"/>
    <lineage>
        <taxon>Eukaryota</taxon>
        <taxon>Viridiplantae</taxon>
        <taxon>Streptophyta</taxon>
        <taxon>Embryophyta</taxon>
        <taxon>Tracheophyta</taxon>
        <taxon>Spermatophyta</taxon>
        <taxon>Magnoliopsida</taxon>
        <taxon>eudicotyledons</taxon>
        <taxon>Gunneridae</taxon>
        <taxon>Pentapetalae</taxon>
        <taxon>rosids</taxon>
        <taxon>malvids</taxon>
        <taxon>Brassicales</taxon>
        <taxon>Brassicaceae</taxon>
        <taxon>Camelineae</taxon>
        <taxon>Arabidopsis</taxon>
    </lineage>
</organism>
<evidence type="ECO:0000255" key="1">
    <source>
        <dbReference type="PROSITE-ProRule" id="PRU00080"/>
    </source>
</evidence>
<evidence type="ECO:0000256" key="2">
    <source>
        <dbReference type="SAM" id="MobiDB-lite"/>
    </source>
</evidence>
<evidence type="ECO:0000305" key="3"/>
<accession>P0C2G4</accession>
<accession>O81868</accession>
<keyword id="KW-0880">Kelch repeat</keyword>
<keyword id="KW-1185">Reference proteome</keyword>
<keyword id="KW-0677">Repeat</keyword>
<comment type="sequence caution" evidence="3">
    <conflict type="erroneous gene model prediction">
        <sequence resource="EMBL-CDS" id="CAA19704"/>
    </conflict>
    <text>The predicted gene At4g19870 has been split into 2 genes: At4g19865 and At4g19870.</text>
</comment>
<comment type="sequence caution" evidence="3">
    <conflict type="erroneous gene model prediction">
        <sequence resource="EMBL-CDS" id="CAB78989"/>
    </conflict>
    <text>The predicted gene At4g19870 has been split into 2 genes: At4g19865 and At4g19870.</text>
</comment>
<protein>
    <recommendedName>
        <fullName>F-box/kelch-repeat protein At4g19865</fullName>
    </recommendedName>
</protein>
<reference key="1">
    <citation type="journal article" date="1999" name="Nature">
        <title>Sequence and analysis of chromosome 4 of the plant Arabidopsis thaliana.</title>
        <authorList>
            <person name="Mayer K.F.X."/>
            <person name="Schueller C."/>
            <person name="Wambutt R."/>
            <person name="Murphy G."/>
            <person name="Volckaert G."/>
            <person name="Pohl T."/>
            <person name="Duesterhoeft A."/>
            <person name="Stiekema W."/>
            <person name="Entian K.-D."/>
            <person name="Terryn N."/>
            <person name="Harris B."/>
            <person name="Ansorge W."/>
            <person name="Brandt P."/>
            <person name="Grivell L.A."/>
            <person name="Rieger M."/>
            <person name="Weichselgartner M."/>
            <person name="de Simone V."/>
            <person name="Obermaier B."/>
            <person name="Mache R."/>
            <person name="Mueller M."/>
            <person name="Kreis M."/>
            <person name="Delseny M."/>
            <person name="Puigdomenech P."/>
            <person name="Watson M."/>
            <person name="Schmidtheini T."/>
            <person name="Reichert B."/>
            <person name="Portetelle D."/>
            <person name="Perez-Alonso M."/>
            <person name="Boutry M."/>
            <person name="Bancroft I."/>
            <person name="Vos P."/>
            <person name="Hoheisel J."/>
            <person name="Zimmermann W."/>
            <person name="Wedler H."/>
            <person name="Ridley P."/>
            <person name="Langham S.-A."/>
            <person name="McCullagh B."/>
            <person name="Bilham L."/>
            <person name="Robben J."/>
            <person name="van der Schueren J."/>
            <person name="Grymonprez B."/>
            <person name="Chuang Y.-J."/>
            <person name="Vandenbussche F."/>
            <person name="Braeken M."/>
            <person name="Weltjens I."/>
            <person name="Voet M."/>
            <person name="Bastiaens I."/>
            <person name="Aert R."/>
            <person name="Defoor E."/>
            <person name="Weitzenegger T."/>
            <person name="Bothe G."/>
            <person name="Ramsperger U."/>
            <person name="Hilbert H."/>
            <person name="Braun M."/>
            <person name="Holzer E."/>
            <person name="Brandt A."/>
            <person name="Peters S."/>
            <person name="van Staveren M."/>
            <person name="Dirkse W."/>
            <person name="Mooijman P."/>
            <person name="Klein Lankhorst R."/>
            <person name="Rose M."/>
            <person name="Hauf J."/>
            <person name="Koetter P."/>
            <person name="Berneiser S."/>
            <person name="Hempel S."/>
            <person name="Feldpausch M."/>
            <person name="Lamberth S."/>
            <person name="Van den Daele H."/>
            <person name="De Keyser A."/>
            <person name="Buysshaert C."/>
            <person name="Gielen J."/>
            <person name="Villarroel R."/>
            <person name="De Clercq R."/>
            <person name="van Montagu M."/>
            <person name="Rogers J."/>
            <person name="Cronin A."/>
            <person name="Quail M.A."/>
            <person name="Bray-Allen S."/>
            <person name="Clark L."/>
            <person name="Doggett J."/>
            <person name="Hall S."/>
            <person name="Kay M."/>
            <person name="Lennard N."/>
            <person name="McLay K."/>
            <person name="Mayes R."/>
            <person name="Pettett A."/>
            <person name="Rajandream M.A."/>
            <person name="Lyne M."/>
            <person name="Benes V."/>
            <person name="Rechmann S."/>
            <person name="Borkova D."/>
            <person name="Bloecker H."/>
            <person name="Scharfe M."/>
            <person name="Grimm M."/>
            <person name="Loehnert T.-H."/>
            <person name="Dose S."/>
            <person name="de Haan M."/>
            <person name="Maarse A.C."/>
            <person name="Schaefer M."/>
            <person name="Mueller-Auer S."/>
            <person name="Gabel C."/>
            <person name="Fuchs M."/>
            <person name="Fartmann B."/>
            <person name="Granderath K."/>
            <person name="Dauner D."/>
            <person name="Herzl A."/>
            <person name="Neumann S."/>
            <person name="Argiriou A."/>
            <person name="Vitale D."/>
            <person name="Liguori R."/>
            <person name="Piravandi E."/>
            <person name="Massenet O."/>
            <person name="Quigley F."/>
            <person name="Clabauld G."/>
            <person name="Muendlein A."/>
            <person name="Felber R."/>
            <person name="Schnabl S."/>
            <person name="Hiller R."/>
            <person name="Schmidt W."/>
            <person name="Lecharny A."/>
            <person name="Aubourg S."/>
            <person name="Chefdor F."/>
            <person name="Cooke R."/>
            <person name="Berger C."/>
            <person name="Monfort A."/>
            <person name="Casacuberta E."/>
            <person name="Gibbons T."/>
            <person name="Weber N."/>
            <person name="Vandenbol M."/>
            <person name="Bargues M."/>
            <person name="Terol J."/>
            <person name="Torres A."/>
            <person name="Perez-Perez A."/>
            <person name="Purnelle B."/>
            <person name="Bent E."/>
            <person name="Johnson S."/>
            <person name="Tacon D."/>
            <person name="Jesse T."/>
            <person name="Heijnen L."/>
            <person name="Schwarz S."/>
            <person name="Scholler P."/>
            <person name="Heber S."/>
            <person name="Francs P."/>
            <person name="Bielke C."/>
            <person name="Frishman D."/>
            <person name="Haase D."/>
            <person name="Lemcke K."/>
            <person name="Mewes H.-W."/>
            <person name="Stocker S."/>
            <person name="Zaccaria P."/>
            <person name="Bevan M."/>
            <person name="Wilson R.K."/>
            <person name="de la Bastide M."/>
            <person name="Habermann K."/>
            <person name="Parnell L."/>
            <person name="Dedhia N."/>
            <person name="Gnoj L."/>
            <person name="Schutz K."/>
            <person name="Huang E."/>
            <person name="Spiegel L."/>
            <person name="Sekhon M."/>
            <person name="Murray J."/>
            <person name="Sheet P."/>
            <person name="Cordes M."/>
            <person name="Abu-Threideh J."/>
            <person name="Stoneking T."/>
            <person name="Kalicki J."/>
            <person name="Graves T."/>
            <person name="Harmon G."/>
            <person name="Edwards J."/>
            <person name="Latreille P."/>
            <person name="Courtney L."/>
            <person name="Cloud J."/>
            <person name="Abbott A."/>
            <person name="Scott K."/>
            <person name="Johnson D."/>
            <person name="Minx P."/>
            <person name="Bentley D."/>
            <person name="Fulton B."/>
            <person name="Miller N."/>
            <person name="Greco T."/>
            <person name="Kemp K."/>
            <person name="Kramer J."/>
            <person name="Fulton L."/>
            <person name="Mardis E."/>
            <person name="Dante M."/>
            <person name="Pepin K."/>
            <person name="Hillier L.W."/>
            <person name="Nelson J."/>
            <person name="Spieth J."/>
            <person name="Ryan E."/>
            <person name="Andrews S."/>
            <person name="Geisel C."/>
            <person name="Layman D."/>
            <person name="Du H."/>
            <person name="Ali J."/>
            <person name="Berghoff A."/>
            <person name="Jones K."/>
            <person name="Drone K."/>
            <person name="Cotton M."/>
            <person name="Joshu C."/>
            <person name="Antonoiu B."/>
            <person name="Zidanic M."/>
            <person name="Strong C."/>
            <person name="Sun H."/>
            <person name="Lamar B."/>
            <person name="Yordan C."/>
            <person name="Ma P."/>
            <person name="Zhong J."/>
            <person name="Preston R."/>
            <person name="Vil D."/>
            <person name="Shekher M."/>
            <person name="Matero A."/>
            <person name="Shah R."/>
            <person name="Swaby I.K."/>
            <person name="O'Shaughnessy A."/>
            <person name="Rodriguez M."/>
            <person name="Hoffman J."/>
            <person name="Till S."/>
            <person name="Granat S."/>
            <person name="Shohdy N."/>
            <person name="Hasegawa A."/>
            <person name="Hameed A."/>
            <person name="Lodhi M."/>
            <person name="Johnson A."/>
            <person name="Chen E."/>
            <person name="Marra M.A."/>
            <person name="Martienssen R."/>
            <person name="McCombie W.R."/>
        </authorList>
    </citation>
    <scope>NUCLEOTIDE SEQUENCE [LARGE SCALE GENOMIC DNA]</scope>
    <source>
        <strain>cv. Columbia</strain>
    </source>
</reference>
<reference key="2">
    <citation type="journal article" date="2017" name="Plant J.">
        <title>Araport11: a complete reannotation of the Arabidopsis thaliana reference genome.</title>
        <authorList>
            <person name="Cheng C.Y."/>
            <person name="Krishnakumar V."/>
            <person name="Chan A.P."/>
            <person name="Thibaud-Nissen F."/>
            <person name="Schobel S."/>
            <person name="Town C.D."/>
        </authorList>
    </citation>
    <scope>GENOME REANNOTATION</scope>
    <source>
        <strain>cv. Columbia</strain>
    </source>
</reference>
<gene>
    <name type="ordered locus">At4g19865</name>
    <name type="ORF">T16H5.230</name>
</gene>
<sequence>MNFQVEPPEKKKTKNSSPPHSPPSSSSPSLSLLPEEIVVHCLARISRLYYPTLSLVSKSFRSILSSTELYATRSHLGSTEQCVYLCLWDPSYQFPQWLRLLVNPNRTLANSIIKKRRKKKKTTGQMLVPLTSSKFTSVSKATVVVGSEIYVLGGPVDSAVRVLDCCSHTWRDAPSMNVSRMNAWACFHDGKIYVMGGCQGLKDEPWAEVFNTKTQTWEGLPEPGSEVRKCSIDRSGVIEGKIEFGNVNEMCAYDTKLCKWEYCVNKSAALRSECMIENVSYGFWNMRLLWYDNDIQKDYWKRLEGLESLDDKYMRNGGSSGNTTKLVACGGKLLLLWEGYMKHNPNNRKKIWCAVIAIEKCDGGGVWGIVESVDVLYTVPISCQLLHCLVVSV</sequence>
<dbReference type="EMBL" id="AL024486">
    <property type="protein sequence ID" value="CAA19704.1"/>
    <property type="status" value="ALT_SEQ"/>
    <property type="molecule type" value="Genomic_DNA"/>
</dbReference>
<dbReference type="EMBL" id="AL161551">
    <property type="protein sequence ID" value="CAB78989.1"/>
    <property type="status" value="ALT_SEQ"/>
    <property type="molecule type" value="Genomic_DNA"/>
</dbReference>
<dbReference type="EMBL" id="CP002687">
    <property type="protein sequence ID" value="AEE84236.1"/>
    <property type="molecule type" value="Genomic_DNA"/>
</dbReference>
<dbReference type="PIR" id="T04768">
    <property type="entry name" value="T04768"/>
</dbReference>
<dbReference type="RefSeq" id="NP_849411.1">
    <property type="nucleotide sequence ID" value="NM_179080.2"/>
</dbReference>
<dbReference type="SMR" id="P0C2G4"/>
<dbReference type="BioGRID" id="13025">
    <property type="interactions" value="2"/>
</dbReference>
<dbReference type="FunCoup" id="P0C2G4">
    <property type="interactions" value="19"/>
</dbReference>
<dbReference type="IntAct" id="P0C2G4">
    <property type="interactions" value="2"/>
</dbReference>
<dbReference type="PaxDb" id="3702-AT4G19865.1"/>
<dbReference type="ProteomicsDB" id="222481"/>
<dbReference type="EnsemblPlants" id="AT4G19865.1">
    <property type="protein sequence ID" value="AT4G19865.1"/>
    <property type="gene ID" value="AT4G19865"/>
</dbReference>
<dbReference type="GeneID" id="827732"/>
<dbReference type="Gramene" id="AT4G19865.1">
    <property type="protein sequence ID" value="AT4G19865.1"/>
    <property type="gene ID" value="AT4G19865"/>
</dbReference>
<dbReference type="KEGG" id="ath:AT4G19865"/>
<dbReference type="Araport" id="AT4G19865"/>
<dbReference type="TAIR" id="AT4G19865"/>
<dbReference type="eggNOG" id="KOG1072">
    <property type="taxonomic scope" value="Eukaryota"/>
</dbReference>
<dbReference type="HOGENOM" id="CLU_032521_1_2_1"/>
<dbReference type="InParanoid" id="P0C2G4"/>
<dbReference type="OMA" id="PSMIVPR"/>
<dbReference type="PhylomeDB" id="P0C2G4"/>
<dbReference type="PRO" id="PR:P0C2G4"/>
<dbReference type="Proteomes" id="UP000006548">
    <property type="component" value="Chromosome 4"/>
</dbReference>
<dbReference type="ExpressionAtlas" id="P0C2G4">
    <property type="expression patterns" value="baseline and differential"/>
</dbReference>
<dbReference type="CDD" id="cd22152">
    <property type="entry name" value="F-box_AtAFR-like"/>
    <property type="match status" value="1"/>
</dbReference>
<dbReference type="Gene3D" id="2.120.10.80">
    <property type="entry name" value="Kelch-type beta propeller"/>
    <property type="match status" value="1"/>
</dbReference>
<dbReference type="InterPro" id="IPR036047">
    <property type="entry name" value="F-box-like_dom_sf"/>
</dbReference>
<dbReference type="InterPro" id="IPR050354">
    <property type="entry name" value="F-box/kelch-repeat_ARATH"/>
</dbReference>
<dbReference type="InterPro" id="IPR001810">
    <property type="entry name" value="F-box_dom"/>
</dbReference>
<dbReference type="InterPro" id="IPR015915">
    <property type="entry name" value="Kelch-typ_b-propeller"/>
</dbReference>
<dbReference type="InterPro" id="IPR006652">
    <property type="entry name" value="Kelch_1"/>
</dbReference>
<dbReference type="PANTHER" id="PTHR24414:SF91">
    <property type="entry name" value="(RAPE) HYPOTHETICAL PROTEIN"/>
    <property type="match status" value="1"/>
</dbReference>
<dbReference type="PANTHER" id="PTHR24414">
    <property type="entry name" value="F-BOX/KELCH-REPEAT PROTEIN SKIP4"/>
    <property type="match status" value="1"/>
</dbReference>
<dbReference type="Pfam" id="PF00646">
    <property type="entry name" value="F-box"/>
    <property type="match status" value="1"/>
</dbReference>
<dbReference type="Pfam" id="PF25210">
    <property type="entry name" value="Kelch_FKB95"/>
    <property type="match status" value="1"/>
</dbReference>
<dbReference type="SMART" id="SM00256">
    <property type="entry name" value="FBOX"/>
    <property type="match status" value="1"/>
</dbReference>
<dbReference type="SMART" id="SM00612">
    <property type="entry name" value="Kelch"/>
    <property type="match status" value="1"/>
</dbReference>
<dbReference type="SUPFAM" id="SSF81383">
    <property type="entry name" value="F-box domain"/>
    <property type="match status" value="1"/>
</dbReference>
<dbReference type="SUPFAM" id="SSF117281">
    <property type="entry name" value="Kelch motif"/>
    <property type="match status" value="1"/>
</dbReference>
<dbReference type="PROSITE" id="PS50181">
    <property type="entry name" value="FBOX"/>
    <property type="match status" value="1"/>
</dbReference>
<name>FBK84_ARATH</name>
<feature type="chain" id="PRO_0000274961" description="F-box/kelch-repeat protein At4g19865">
    <location>
        <begin position="1"/>
        <end position="393"/>
    </location>
</feature>
<feature type="domain" description="F-box" evidence="1">
    <location>
        <begin position="27"/>
        <end position="73"/>
    </location>
</feature>
<feature type="repeat" description="Kelch 1">
    <location>
        <begin position="148"/>
        <end position="190"/>
    </location>
</feature>
<feature type="repeat" description="Kelch 2">
    <location>
        <begin position="191"/>
        <end position="237"/>
    </location>
</feature>
<feature type="repeat" description="Kelch 3">
    <location>
        <begin position="239"/>
        <end position="272"/>
    </location>
</feature>
<feature type="repeat" description="Kelch 4">
    <location>
        <begin position="273"/>
        <end position="320"/>
    </location>
</feature>
<feature type="region of interest" description="Disordered" evidence="2">
    <location>
        <begin position="1"/>
        <end position="30"/>
    </location>
</feature>
<proteinExistence type="predicted"/>